<accession>Q83CQ8</accession>
<feature type="chain" id="PRO_0000177058" description="Translational regulator CsrA 2">
    <location>
        <begin position="1"/>
        <end position="70"/>
    </location>
</feature>
<comment type="function">
    <text evidence="1">A key translational regulator that binds mRNA to regulate translation initiation and/or mRNA stability. Mediates global changes in gene expression, shifting from rapid growth to stress survival by linking envelope stress, the stringent response and the catabolite repression systems. Usually binds in the 5'-UTR; binding at or near the Shine-Dalgarno sequence prevents ribosome-binding, repressing translation, binding elsewhere in the 5'-UTR can activate translation and/or stabilize the mRNA. Its function is antagonized by small RNA(s).</text>
</comment>
<comment type="subunit">
    <text evidence="1">Homodimer; the beta-strands of each monomer intercalate to form a hydrophobic core, while the alpha-helices form wings that extend away from the core.</text>
</comment>
<comment type="subcellular location">
    <subcellularLocation>
        <location evidence="1">Cytoplasm</location>
    </subcellularLocation>
</comment>
<comment type="similarity">
    <text evidence="1">Belongs to the CsrA/RsmA family.</text>
</comment>
<protein>
    <recommendedName>
        <fullName evidence="1">Translational regulator CsrA 2</fullName>
    </recommendedName>
    <alternativeName>
        <fullName evidence="1">Carbon storage regulator 2</fullName>
    </alternativeName>
</protein>
<name>CSRA2_COXBU</name>
<evidence type="ECO:0000255" key="1">
    <source>
        <dbReference type="HAMAP-Rule" id="MF_00167"/>
    </source>
</evidence>
<sequence length="70" mass="7965">MLILTRRIGESVIIGDDIKITVLGVKGNQVRLGIDAPKDISVHREEIYERIQQEKLAQSEDQGEKTDEFE</sequence>
<organism>
    <name type="scientific">Coxiella burnetii (strain RSA 493 / Nine Mile phase I)</name>
    <dbReference type="NCBI Taxonomy" id="227377"/>
    <lineage>
        <taxon>Bacteria</taxon>
        <taxon>Pseudomonadati</taxon>
        <taxon>Pseudomonadota</taxon>
        <taxon>Gammaproteobacteria</taxon>
        <taxon>Legionellales</taxon>
        <taxon>Coxiellaceae</taxon>
        <taxon>Coxiella</taxon>
    </lineage>
</organism>
<reference key="1">
    <citation type="journal article" date="2003" name="Proc. Natl. Acad. Sci. U.S.A.">
        <title>Complete genome sequence of the Q-fever pathogen, Coxiella burnetii.</title>
        <authorList>
            <person name="Seshadri R."/>
            <person name="Paulsen I.T."/>
            <person name="Eisen J.A."/>
            <person name="Read T.D."/>
            <person name="Nelson K.E."/>
            <person name="Nelson W.C."/>
            <person name="Ward N.L."/>
            <person name="Tettelin H."/>
            <person name="Davidsen T.M."/>
            <person name="Beanan M.J."/>
            <person name="DeBoy R.T."/>
            <person name="Daugherty S.C."/>
            <person name="Brinkac L.M."/>
            <person name="Madupu R."/>
            <person name="Dodson R.J."/>
            <person name="Khouri H.M."/>
            <person name="Lee K.H."/>
            <person name="Carty H.A."/>
            <person name="Scanlan D."/>
            <person name="Heinzen R.A."/>
            <person name="Thompson H.A."/>
            <person name="Samuel J.E."/>
            <person name="Fraser C.M."/>
            <person name="Heidelberg J.F."/>
        </authorList>
    </citation>
    <scope>NUCLEOTIDE SEQUENCE [LARGE SCALE GENOMIC DNA]</scope>
    <source>
        <strain>RSA 493 / Nine Mile phase I</strain>
    </source>
</reference>
<dbReference type="EMBL" id="AE016828">
    <property type="protein sequence ID" value="AAO90565.1"/>
    <property type="molecule type" value="Genomic_DNA"/>
</dbReference>
<dbReference type="RefSeq" id="NP_820051.1">
    <property type="nucleotide sequence ID" value="NC_002971.3"/>
</dbReference>
<dbReference type="SMR" id="Q83CQ8"/>
<dbReference type="STRING" id="227377.CBU_1050"/>
<dbReference type="EnsemblBacteria" id="AAO90565">
    <property type="protein sequence ID" value="AAO90565"/>
    <property type="gene ID" value="CBU_1050"/>
</dbReference>
<dbReference type="GeneID" id="1208951"/>
<dbReference type="KEGG" id="cbu:CBU_1050"/>
<dbReference type="PATRIC" id="fig|227377.7.peg.1041"/>
<dbReference type="eggNOG" id="COG1551">
    <property type="taxonomic scope" value="Bacteria"/>
</dbReference>
<dbReference type="HOGENOM" id="CLU_164837_2_1_6"/>
<dbReference type="OrthoDB" id="9809061at2"/>
<dbReference type="Proteomes" id="UP000002671">
    <property type="component" value="Chromosome"/>
</dbReference>
<dbReference type="GO" id="GO:0005829">
    <property type="term" value="C:cytosol"/>
    <property type="evidence" value="ECO:0000318"/>
    <property type="project" value="GO_Central"/>
</dbReference>
<dbReference type="GO" id="GO:0048027">
    <property type="term" value="F:mRNA 5'-UTR binding"/>
    <property type="evidence" value="ECO:0007669"/>
    <property type="project" value="UniProtKB-UniRule"/>
</dbReference>
<dbReference type="GO" id="GO:0006402">
    <property type="term" value="P:mRNA catabolic process"/>
    <property type="evidence" value="ECO:0007669"/>
    <property type="project" value="InterPro"/>
</dbReference>
<dbReference type="GO" id="GO:0045947">
    <property type="term" value="P:negative regulation of translational initiation"/>
    <property type="evidence" value="ECO:0007669"/>
    <property type="project" value="UniProtKB-UniRule"/>
</dbReference>
<dbReference type="GO" id="GO:0045948">
    <property type="term" value="P:positive regulation of translational initiation"/>
    <property type="evidence" value="ECO:0007669"/>
    <property type="project" value="UniProtKB-UniRule"/>
</dbReference>
<dbReference type="GO" id="GO:0006109">
    <property type="term" value="P:regulation of carbohydrate metabolic process"/>
    <property type="evidence" value="ECO:0007669"/>
    <property type="project" value="UniProtKB-UniRule"/>
</dbReference>
<dbReference type="FunFam" id="2.60.40.4380:FF:000001">
    <property type="entry name" value="Translational regulator CsrA"/>
    <property type="match status" value="1"/>
</dbReference>
<dbReference type="Gene3D" id="2.60.40.4380">
    <property type="entry name" value="Translational regulator CsrA"/>
    <property type="match status" value="1"/>
</dbReference>
<dbReference type="HAMAP" id="MF_00167">
    <property type="entry name" value="CsrA"/>
    <property type="match status" value="1"/>
</dbReference>
<dbReference type="InterPro" id="IPR003751">
    <property type="entry name" value="CsrA"/>
</dbReference>
<dbReference type="InterPro" id="IPR036107">
    <property type="entry name" value="CsrA_sf"/>
</dbReference>
<dbReference type="NCBIfam" id="TIGR00202">
    <property type="entry name" value="csrA"/>
    <property type="match status" value="1"/>
</dbReference>
<dbReference type="NCBIfam" id="NF002469">
    <property type="entry name" value="PRK01712.1"/>
    <property type="match status" value="1"/>
</dbReference>
<dbReference type="PANTHER" id="PTHR34984">
    <property type="entry name" value="CARBON STORAGE REGULATOR"/>
    <property type="match status" value="1"/>
</dbReference>
<dbReference type="PANTHER" id="PTHR34984:SF1">
    <property type="entry name" value="CARBON STORAGE REGULATOR"/>
    <property type="match status" value="1"/>
</dbReference>
<dbReference type="Pfam" id="PF02599">
    <property type="entry name" value="CsrA"/>
    <property type="match status" value="1"/>
</dbReference>
<dbReference type="SUPFAM" id="SSF117130">
    <property type="entry name" value="CsrA-like"/>
    <property type="match status" value="1"/>
</dbReference>
<proteinExistence type="inferred from homology"/>
<gene>
    <name evidence="1" type="primary">csrA2</name>
    <name type="synonym">csrA-2</name>
    <name type="ordered locus">CBU_1050</name>
</gene>
<keyword id="KW-0010">Activator</keyword>
<keyword id="KW-0963">Cytoplasm</keyword>
<keyword id="KW-1185">Reference proteome</keyword>
<keyword id="KW-0678">Repressor</keyword>
<keyword id="KW-0694">RNA-binding</keyword>
<keyword id="KW-0810">Translation regulation</keyword>